<organism>
    <name type="scientific">Tolumonas auensis (strain DSM 9187 / NBRC 110442 / TA 4)</name>
    <dbReference type="NCBI Taxonomy" id="595494"/>
    <lineage>
        <taxon>Bacteria</taxon>
        <taxon>Pseudomonadati</taxon>
        <taxon>Pseudomonadota</taxon>
        <taxon>Gammaproteobacteria</taxon>
        <taxon>Aeromonadales</taxon>
        <taxon>Aeromonadaceae</taxon>
        <taxon>Tolumonas</taxon>
    </lineage>
</organism>
<evidence type="ECO:0000255" key="1">
    <source>
        <dbReference type="HAMAP-Rule" id="MF_01954"/>
    </source>
</evidence>
<name>URE2_TOLAT</name>
<comment type="catalytic activity">
    <reaction evidence="1">
        <text>urea + 2 H2O + H(+) = hydrogencarbonate + 2 NH4(+)</text>
        <dbReference type="Rhea" id="RHEA:20557"/>
        <dbReference type="ChEBI" id="CHEBI:15377"/>
        <dbReference type="ChEBI" id="CHEBI:15378"/>
        <dbReference type="ChEBI" id="CHEBI:16199"/>
        <dbReference type="ChEBI" id="CHEBI:17544"/>
        <dbReference type="ChEBI" id="CHEBI:28938"/>
        <dbReference type="EC" id="3.5.1.5"/>
    </reaction>
</comment>
<comment type="pathway">
    <text evidence="1">Nitrogen metabolism; urea degradation; CO(2) and NH(3) from urea (urease route): step 1/1.</text>
</comment>
<comment type="subunit">
    <text evidence="1">Heterotrimer of UreA (gamma), UreB (beta) and UreC (alpha) subunits. Three heterotrimers associate to form the active enzyme.</text>
</comment>
<comment type="subcellular location">
    <subcellularLocation>
        <location evidence="1">Cytoplasm</location>
    </subcellularLocation>
</comment>
<comment type="similarity">
    <text evidence="1">Belongs to the urease beta subunit family.</text>
</comment>
<sequence>MIPGEIQVADGDLLLNEGRATLQVAVANTGDRPIQIGSHYHFFETNPALQFDRAATRGFRLDIPAGTAVRFEPGQTRTVTLVAYAGRRHVYGFRGDVMGPLDEIAQSDQGAQHEQGAQA</sequence>
<dbReference type="EC" id="3.5.1.5" evidence="1"/>
<dbReference type="EMBL" id="CP001616">
    <property type="protein sequence ID" value="ACQ93231.1"/>
    <property type="molecule type" value="Genomic_DNA"/>
</dbReference>
<dbReference type="RefSeq" id="WP_015878702.1">
    <property type="nucleotide sequence ID" value="NC_012691.1"/>
</dbReference>
<dbReference type="SMR" id="C4LF64"/>
<dbReference type="STRING" id="595494.Tola_1620"/>
<dbReference type="KEGG" id="tau:Tola_1620"/>
<dbReference type="eggNOG" id="COG0832">
    <property type="taxonomic scope" value="Bacteria"/>
</dbReference>
<dbReference type="HOGENOM" id="CLU_129707_1_1_6"/>
<dbReference type="OrthoDB" id="9797217at2"/>
<dbReference type="UniPathway" id="UPA00258">
    <property type="reaction ID" value="UER00370"/>
</dbReference>
<dbReference type="Proteomes" id="UP000009073">
    <property type="component" value="Chromosome"/>
</dbReference>
<dbReference type="GO" id="GO:0035550">
    <property type="term" value="C:urease complex"/>
    <property type="evidence" value="ECO:0007669"/>
    <property type="project" value="InterPro"/>
</dbReference>
<dbReference type="GO" id="GO:0009039">
    <property type="term" value="F:urease activity"/>
    <property type="evidence" value="ECO:0007669"/>
    <property type="project" value="UniProtKB-UniRule"/>
</dbReference>
<dbReference type="GO" id="GO:0043419">
    <property type="term" value="P:urea catabolic process"/>
    <property type="evidence" value="ECO:0007669"/>
    <property type="project" value="UniProtKB-UniRule"/>
</dbReference>
<dbReference type="CDD" id="cd00407">
    <property type="entry name" value="Urease_beta"/>
    <property type="match status" value="1"/>
</dbReference>
<dbReference type="FunFam" id="2.10.150.10:FF:000001">
    <property type="entry name" value="Urease subunit beta"/>
    <property type="match status" value="1"/>
</dbReference>
<dbReference type="Gene3D" id="2.10.150.10">
    <property type="entry name" value="Urease, beta subunit"/>
    <property type="match status" value="1"/>
</dbReference>
<dbReference type="HAMAP" id="MF_01954">
    <property type="entry name" value="Urease_beta"/>
    <property type="match status" value="1"/>
</dbReference>
<dbReference type="InterPro" id="IPR002019">
    <property type="entry name" value="Urease_beta-like"/>
</dbReference>
<dbReference type="InterPro" id="IPR036461">
    <property type="entry name" value="Urease_betasu_sf"/>
</dbReference>
<dbReference type="InterPro" id="IPR050069">
    <property type="entry name" value="Urease_subunit"/>
</dbReference>
<dbReference type="NCBIfam" id="NF009682">
    <property type="entry name" value="PRK13203.1"/>
    <property type="match status" value="1"/>
</dbReference>
<dbReference type="NCBIfam" id="TIGR00192">
    <property type="entry name" value="urease_beta"/>
    <property type="match status" value="1"/>
</dbReference>
<dbReference type="PANTHER" id="PTHR33569">
    <property type="entry name" value="UREASE"/>
    <property type="match status" value="1"/>
</dbReference>
<dbReference type="PANTHER" id="PTHR33569:SF1">
    <property type="entry name" value="UREASE"/>
    <property type="match status" value="1"/>
</dbReference>
<dbReference type="Pfam" id="PF00699">
    <property type="entry name" value="Urease_beta"/>
    <property type="match status" value="1"/>
</dbReference>
<dbReference type="SUPFAM" id="SSF51278">
    <property type="entry name" value="Urease, beta-subunit"/>
    <property type="match status" value="1"/>
</dbReference>
<protein>
    <recommendedName>
        <fullName evidence="1">Urease subunit beta</fullName>
        <ecNumber evidence="1">3.5.1.5</ecNumber>
    </recommendedName>
    <alternativeName>
        <fullName evidence="1">Urea amidohydrolase subunit beta</fullName>
    </alternativeName>
</protein>
<feature type="chain" id="PRO_1000216206" description="Urease subunit beta">
    <location>
        <begin position="1"/>
        <end position="119"/>
    </location>
</feature>
<proteinExistence type="inferred from homology"/>
<accession>C4LF64</accession>
<reference key="1">
    <citation type="submission" date="2009-05" db="EMBL/GenBank/DDBJ databases">
        <title>Complete sequence of Tolumonas auensis DSM 9187.</title>
        <authorList>
            <consortium name="US DOE Joint Genome Institute"/>
            <person name="Lucas S."/>
            <person name="Copeland A."/>
            <person name="Lapidus A."/>
            <person name="Glavina del Rio T."/>
            <person name="Tice H."/>
            <person name="Bruce D."/>
            <person name="Goodwin L."/>
            <person name="Pitluck S."/>
            <person name="Chertkov O."/>
            <person name="Brettin T."/>
            <person name="Detter J.C."/>
            <person name="Han C."/>
            <person name="Larimer F."/>
            <person name="Land M."/>
            <person name="Hauser L."/>
            <person name="Kyrpides N."/>
            <person name="Mikhailova N."/>
            <person name="Spring S."/>
            <person name="Beller H."/>
        </authorList>
    </citation>
    <scope>NUCLEOTIDE SEQUENCE [LARGE SCALE GENOMIC DNA]</scope>
    <source>
        <strain>DSM 9187 / NBRC 110442 / TA 4</strain>
    </source>
</reference>
<keyword id="KW-0963">Cytoplasm</keyword>
<keyword id="KW-0378">Hydrolase</keyword>
<keyword id="KW-1185">Reference proteome</keyword>
<gene>
    <name evidence="1" type="primary">ureB</name>
    <name type="ordered locus">Tola_1620</name>
</gene>